<feature type="chain" id="PRO_0000384403" description="Probable basic-leucine zipper transcription factor C">
    <location>
        <begin position="1"/>
        <end position="804"/>
    </location>
</feature>
<feature type="domain" description="bZIP" evidence="2">
    <location>
        <begin position="415"/>
        <end position="478"/>
    </location>
</feature>
<feature type="region of interest" description="Disordered" evidence="3">
    <location>
        <begin position="86"/>
        <end position="148"/>
    </location>
</feature>
<feature type="region of interest" description="Disordered" evidence="3">
    <location>
        <begin position="275"/>
        <end position="371"/>
    </location>
</feature>
<feature type="region of interest" description="Basic motif" evidence="2">
    <location>
        <begin position="421"/>
        <end position="436"/>
    </location>
</feature>
<feature type="region of interest" description="Leucine-zipper" evidence="2">
    <location>
        <begin position="443"/>
        <end position="450"/>
    </location>
</feature>
<feature type="region of interest" description="Disordered" evidence="3">
    <location>
        <begin position="670"/>
        <end position="693"/>
    </location>
</feature>
<feature type="compositionally biased region" description="Low complexity" evidence="3">
    <location>
        <begin position="90"/>
        <end position="145"/>
    </location>
</feature>
<feature type="compositionally biased region" description="Polar residues" evidence="3">
    <location>
        <begin position="275"/>
        <end position="291"/>
    </location>
</feature>
<feature type="compositionally biased region" description="Low complexity" evidence="3">
    <location>
        <begin position="292"/>
        <end position="334"/>
    </location>
</feature>
<feature type="compositionally biased region" description="Basic and acidic residues" evidence="3">
    <location>
        <begin position="335"/>
        <end position="356"/>
    </location>
</feature>
<feature type="compositionally biased region" description="Low complexity" evidence="3">
    <location>
        <begin position="672"/>
        <end position="685"/>
    </location>
</feature>
<sequence>MGDFNSNEDNNNPFNNVLYNPYIVDLYDTTNNNNNNNNNNNIISGFNCDSSIFTQQISNTNNELTIPLTQSIQNLLPPVQQQTQLFISPNNNNNNNNNNNNNNNNNNNNNNNNNNNNNNNNNNNNNNNNNNNNNNNNNNNNNNNNDINTSIDINLNQLVYSTPSQQITNSVQPIYQCATQSTTSNIDTNINTINDNNNNNNNNNNNNNNSVNNNLLSMCQDPTLILQIQQLLLQQQLLQQAQQQSVPLNIQVPTTTTPINQQHQALLVPQQKQFYGNVSDNSSPETNFSYASPSSPSSTQSQSSPYEQQPLSPNPTISLSSSISVTATTTTRPNATEKTKESSLKSKSKSNEKDKEREDEEEDDDDRPKKRKKFDKNVYKGVDLGDELLEITSEEFQAYKNNFFANASDKKTVSALNYQFRKIKNRESARRSRERKATHVDELEAKIAEIEKERDNYKKENERLRMELDQYKLQEKQKSAGSIFDYISIGSPTTQNFSKNFGIILFLFLFGSFILTNTTPNFFNTNNGVINPNLVYNANSNNNNNNNNNVNRFSVNGVHSTQQYFQSQRNPLSNLDEDSLESLTASQGVFSTHFVPEQPSILLNRESIRNWATLPQNSVASLSFEKDNALKTIENANLDKSKHNVISNLNQLQQQQPSSDELMIDQKEEKNCNNNNENNNNNDNNKNSDDEKGKEIEEIKRKSTTTTISPTRYVNNSTISLLVNPTSVIGDIPDDLMKNSNVTTFGENSSFKFNFLIDTQNFPNGSNDISKAFFDNENQQMTVTSVIIAIQKSPKTPSQQPSTK</sequence>
<comment type="function">
    <text evidence="1">Probable transcriptional regulator.</text>
</comment>
<comment type="subcellular location">
    <subcellularLocation>
        <location evidence="2">Nucleus</location>
    </subcellularLocation>
</comment>
<comment type="similarity">
    <text evidence="4">Belongs to the bZIP family.</text>
</comment>
<accession>Q54WU0</accession>
<keyword id="KW-0238">DNA-binding</keyword>
<keyword id="KW-0539">Nucleus</keyword>
<keyword id="KW-1185">Reference proteome</keyword>
<keyword id="KW-0804">Transcription</keyword>
<keyword id="KW-0805">Transcription regulation</keyword>
<protein>
    <recommendedName>
        <fullName>Probable basic-leucine zipper transcription factor C</fullName>
    </recommendedName>
</protein>
<proteinExistence type="inferred from homology"/>
<gene>
    <name type="primary">bzpC</name>
    <name type="ORF">DDB_G0279439</name>
</gene>
<evidence type="ECO:0000250" key="1"/>
<evidence type="ECO:0000255" key="2">
    <source>
        <dbReference type="PROSITE-ProRule" id="PRU00978"/>
    </source>
</evidence>
<evidence type="ECO:0000256" key="3">
    <source>
        <dbReference type="SAM" id="MobiDB-lite"/>
    </source>
</evidence>
<evidence type="ECO:0000305" key="4"/>
<reference key="1">
    <citation type="journal article" date="2005" name="Nature">
        <title>The genome of the social amoeba Dictyostelium discoideum.</title>
        <authorList>
            <person name="Eichinger L."/>
            <person name="Pachebat J.A."/>
            <person name="Gloeckner G."/>
            <person name="Rajandream M.A."/>
            <person name="Sucgang R."/>
            <person name="Berriman M."/>
            <person name="Song J."/>
            <person name="Olsen R."/>
            <person name="Szafranski K."/>
            <person name="Xu Q."/>
            <person name="Tunggal B."/>
            <person name="Kummerfeld S."/>
            <person name="Madera M."/>
            <person name="Konfortov B.A."/>
            <person name="Rivero F."/>
            <person name="Bankier A.T."/>
            <person name="Lehmann R."/>
            <person name="Hamlin N."/>
            <person name="Davies R."/>
            <person name="Gaudet P."/>
            <person name="Fey P."/>
            <person name="Pilcher K."/>
            <person name="Chen G."/>
            <person name="Saunders D."/>
            <person name="Sodergren E.J."/>
            <person name="Davis P."/>
            <person name="Kerhornou A."/>
            <person name="Nie X."/>
            <person name="Hall N."/>
            <person name="Anjard C."/>
            <person name="Hemphill L."/>
            <person name="Bason N."/>
            <person name="Farbrother P."/>
            <person name="Desany B."/>
            <person name="Just E."/>
            <person name="Morio T."/>
            <person name="Rost R."/>
            <person name="Churcher C.M."/>
            <person name="Cooper J."/>
            <person name="Haydock S."/>
            <person name="van Driessche N."/>
            <person name="Cronin A."/>
            <person name="Goodhead I."/>
            <person name="Muzny D.M."/>
            <person name="Mourier T."/>
            <person name="Pain A."/>
            <person name="Lu M."/>
            <person name="Harper D."/>
            <person name="Lindsay R."/>
            <person name="Hauser H."/>
            <person name="James K.D."/>
            <person name="Quiles M."/>
            <person name="Madan Babu M."/>
            <person name="Saito T."/>
            <person name="Buchrieser C."/>
            <person name="Wardroper A."/>
            <person name="Felder M."/>
            <person name="Thangavelu M."/>
            <person name="Johnson D."/>
            <person name="Knights A."/>
            <person name="Loulseged H."/>
            <person name="Mungall K.L."/>
            <person name="Oliver K."/>
            <person name="Price C."/>
            <person name="Quail M.A."/>
            <person name="Urushihara H."/>
            <person name="Hernandez J."/>
            <person name="Rabbinowitsch E."/>
            <person name="Steffen D."/>
            <person name="Sanders M."/>
            <person name="Ma J."/>
            <person name="Kohara Y."/>
            <person name="Sharp S."/>
            <person name="Simmonds M.N."/>
            <person name="Spiegler S."/>
            <person name="Tivey A."/>
            <person name="Sugano S."/>
            <person name="White B."/>
            <person name="Walker D."/>
            <person name="Woodward J.R."/>
            <person name="Winckler T."/>
            <person name="Tanaka Y."/>
            <person name="Shaulsky G."/>
            <person name="Schleicher M."/>
            <person name="Weinstock G.M."/>
            <person name="Rosenthal A."/>
            <person name="Cox E.C."/>
            <person name="Chisholm R.L."/>
            <person name="Gibbs R.A."/>
            <person name="Loomis W.F."/>
            <person name="Platzer M."/>
            <person name="Kay R.R."/>
            <person name="Williams J.G."/>
            <person name="Dear P.H."/>
            <person name="Noegel A.A."/>
            <person name="Barrell B.G."/>
            <person name="Kuspa A."/>
        </authorList>
    </citation>
    <scope>NUCLEOTIDE SEQUENCE [LARGE SCALE GENOMIC DNA]</scope>
    <source>
        <strain>AX4</strain>
    </source>
</reference>
<reference key="2">
    <citation type="journal article" date="2006" name="Development">
        <title>bZIP transcription factor interactions regulate DIF responses in Dictyostelium.</title>
        <authorList>
            <person name="Huang E."/>
            <person name="Blagg S.L."/>
            <person name="Keller T."/>
            <person name="Katoh M."/>
            <person name="Shaulsky G."/>
            <person name="Thompson C.R.L."/>
        </authorList>
    </citation>
    <scope>IDENTIFICATION</scope>
</reference>
<name>BZPC_DICDI</name>
<organism>
    <name type="scientific">Dictyostelium discoideum</name>
    <name type="common">Social amoeba</name>
    <dbReference type="NCBI Taxonomy" id="44689"/>
    <lineage>
        <taxon>Eukaryota</taxon>
        <taxon>Amoebozoa</taxon>
        <taxon>Evosea</taxon>
        <taxon>Eumycetozoa</taxon>
        <taxon>Dictyostelia</taxon>
        <taxon>Dictyosteliales</taxon>
        <taxon>Dictyosteliaceae</taxon>
        <taxon>Dictyostelium</taxon>
    </lineage>
</organism>
<dbReference type="EMBL" id="AAFI02000031">
    <property type="protein sequence ID" value="EAL67658.1"/>
    <property type="molecule type" value="Genomic_DNA"/>
</dbReference>
<dbReference type="RefSeq" id="XP_641627.1">
    <property type="nucleotide sequence ID" value="XM_636535.1"/>
</dbReference>
<dbReference type="SMR" id="Q54WU0"/>
<dbReference type="FunCoup" id="Q54WU0">
    <property type="interactions" value="476"/>
</dbReference>
<dbReference type="STRING" id="44689.Q54WU0"/>
<dbReference type="PaxDb" id="44689-DDB0220096"/>
<dbReference type="EnsemblProtists" id="EAL67658">
    <property type="protein sequence ID" value="EAL67658"/>
    <property type="gene ID" value="DDB_G0279439"/>
</dbReference>
<dbReference type="GeneID" id="8622033"/>
<dbReference type="KEGG" id="ddi:DDB_G0279439"/>
<dbReference type="dictyBase" id="DDB_G0279439">
    <property type="gene designation" value="bzpC"/>
</dbReference>
<dbReference type="VEuPathDB" id="AmoebaDB:DDB_G0279439"/>
<dbReference type="eggNOG" id="ENOG502SEPJ">
    <property type="taxonomic scope" value="Eukaryota"/>
</dbReference>
<dbReference type="HOGENOM" id="CLU_350377_0_0_1"/>
<dbReference type="InParanoid" id="Q54WU0"/>
<dbReference type="OMA" id="ERKATHV"/>
<dbReference type="Reactome" id="R-DDI-381033">
    <property type="pathway name" value="ATF6 (ATF6-alpha) activates chaperones"/>
</dbReference>
<dbReference type="Reactome" id="R-DDI-9909505">
    <property type="pathway name" value="Modulation of host responses by IFN-stimulated genes"/>
</dbReference>
<dbReference type="PRO" id="PR:Q54WU0"/>
<dbReference type="Proteomes" id="UP000002195">
    <property type="component" value="Chromosome 3"/>
</dbReference>
<dbReference type="GO" id="GO:0005634">
    <property type="term" value="C:nucleus"/>
    <property type="evidence" value="ECO:0000318"/>
    <property type="project" value="GO_Central"/>
</dbReference>
<dbReference type="GO" id="GO:0000981">
    <property type="term" value="F:DNA-binding transcription factor activity, RNA polymerase II-specific"/>
    <property type="evidence" value="ECO:0000318"/>
    <property type="project" value="GO_Central"/>
</dbReference>
<dbReference type="GO" id="GO:0000978">
    <property type="term" value="F:RNA polymerase II cis-regulatory region sequence-specific DNA binding"/>
    <property type="evidence" value="ECO:0000318"/>
    <property type="project" value="GO_Central"/>
</dbReference>
<dbReference type="GO" id="GO:0030968">
    <property type="term" value="P:endoplasmic reticulum unfolded protein response"/>
    <property type="evidence" value="ECO:0000318"/>
    <property type="project" value="GO_Central"/>
</dbReference>
<dbReference type="GO" id="GO:0006357">
    <property type="term" value="P:regulation of transcription by RNA polymerase II"/>
    <property type="evidence" value="ECO:0000318"/>
    <property type="project" value="GO_Central"/>
</dbReference>
<dbReference type="Gene3D" id="1.20.5.170">
    <property type="match status" value="1"/>
</dbReference>
<dbReference type="InterPro" id="IPR051882">
    <property type="entry name" value="ATF_bZIP_TF"/>
</dbReference>
<dbReference type="InterPro" id="IPR004827">
    <property type="entry name" value="bZIP"/>
</dbReference>
<dbReference type="InterPro" id="IPR046347">
    <property type="entry name" value="bZIP_sf"/>
</dbReference>
<dbReference type="PANTHER" id="PTHR46164">
    <property type="entry name" value="ATF6, ISOFORM C"/>
    <property type="match status" value="1"/>
</dbReference>
<dbReference type="PANTHER" id="PTHR46164:SF4">
    <property type="entry name" value="BASIC-LEUCINE ZIPPER TRANSCRIPTION FACTOR C-RELATED"/>
    <property type="match status" value="1"/>
</dbReference>
<dbReference type="Pfam" id="PF00170">
    <property type="entry name" value="bZIP_1"/>
    <property type="match status" value="1"/>
</dbReference>
<dbReference type="SMART" id="SM00338">
    <property type="entry name" value="BRLZ"/>
    <property type="match status" value="1"/>
</dbReference>
<dbReference type="SUPFAM" id="SSF57959">
    <property type="entry name" value="Leucine zipper domain"/>
    <property type="match status" value="1"/>
</dbReference>
<dbReference type="PROSITE" id="PS50217">
    <property type="entry name" value="BZIP"/>
    <property type="match status" value="1"/>
</dbReference>
<dbReference type="PROSITE" id="PS00036">
    <property type="entry name" value="BZIP_BASIC"/>
    <property type="match status" value="1"/>
</dbReference>